<proteinExistence type="inferred from homology"/>
<keyword id="KW-0975">Bacterial flagellum</keyword>
<feature type="chain" id="PRO_1000132672" description="Flagellar hook-basal body complex protein FliE">
    <location>
        <begin position="1"/>
        <end position="104"/>
    </location>
</feature>
<reference key="1">
    <citation type="journal article" date="2008" name="Genome Res.">
        <title>Comparative genome analysis of Salmonella enteritidis PT4 and Salmonella gallinarum 287/91 provides insights into evolutionary and host adaptation pathways.</title>
        <authorList>
            <person name="Thomson N.R."/>
            <person name="Clayton D.J."/>
            <person name="Windhorst D."/>
            <person name="Vernikos G."/>
            <person name="Davidson S."/>
            <person name="Churcher C."/>
            <person name="Quail M.A."/>
            <person name="Stevens M."/>
            <person name="Jones M.A."/>
            <person name="Watson M."/>
            <person name="Barron A."/>
            <person name="Layton A."/>
            <person name="Pickard D."/>
            <person name="Kingsley R.A."/>
            <person name="Bignell A."/>
            <person name="Clark L."/>
            <person name="Harris B."/>
            <person name="Ormond D."/>
            <person name="Abdellah Z."/>
            <person name="Brooks K."/>
            <person name="Cherevach I."/>
            <person name="Chillingworth T."/>
            <person name="Woodward J."/>
            <person name="Norberczak H."/>
            <person name="Lord A."/>
            <person name="Arrowsmith C."/>
            <person name="Jagels K."/>
            <person name="Moule S."/>
            <person name="Mungall K."/>
            <person name="Saunders M."/>
            <person name="Whitehead S."/>
            <person name="Chabalgoity J.A."/>
            <person name="Maskell D."/>
            <person name="Humphreys T."/>
            <person name="Roberts M."/>
            <person name="Barrow P.A."/>
            <person name="Dougan G."/>
            <person name="Parkhill J."/>
        </authorList>
    </citation>
    <scope>NUCLEOTIDE SEQUENCE [LARGE SCALE GENOMIC DNA]</scope>
    <source>
        <strain>287/91 / NCTC 13346</strain>
    </source>
</reference>
<dbReference type="EMBL" id="AM933173">
    <property type="protein sequence ID" value="CAR36972.1"/>
    <property type="molecule type" value="Genomic_DNA"/>
</dbReference>
<dbReference type="RefSeq" id="WP_000719037.1">
    <property type="nucleotide sequence ID" value="NC_011274.1"/>
</dbReference>
<dbReference type="SMR" id="B5R7G4"/>
<dbReference type="KEGG" id="seg:SG1087"/>
<dbReference type="HOGENOM" id="CLU_147249_0_2_6"/>
<dbReference type="Proteomes" id="UP000008321">
    <property type="component" value="Chromosome"/>
</dbReference>
<dbReference type="GO" id="GO:0009425">
    <property type="term" value="C:bacterial-type flagellum basal body"/>
    <property type="evidence" value="ECO:0007669"/>
    <property type="project" value="UniProtKB-SubCell"/>
</dbReference>
<dbReference type="GO" id="GO:0003774">
    <property type="term" value="F:cytoskeletal motor activity"/>
    <property type="evidence" value="ECO:0007669"/>
    <property type="project" value="InterPro"/>
</dbReference>
<dbReference type="GO" id="GO:0005198">
    <property type="term" value="F:structural molecule activity"/>
    <property type="evidence" value="ECO:0007669"/>
    <property type="project" value="InterPro"/>
</dbReference>
<dbReference type="GO" id="GO:0071973">
    <property type="term" value="P:bacterial-type flagellum-dependent cell motility"/>
    <property type="evidence" value="ECO:0007669"/>
    <property type="project" value="InterPro"/>
</dbReference>
<dbReference type="HAMAP" id="MF_00724">
    <property type="entry name" value="FliE"/>
    <property type="match status" value="1"/>
</dbReference>
<dbReference type="InterPro" id="IPR001624">
    <property type="entry name" value="FliE"/>
</dbReference>
<dbReference type="NCBIfam" id="TIGR00205">
    <property type="entry name" value="fliE"/>
    <property type="match status" value="1"/>
</dbReference>
<dbReference type="PANTHER" id="PTHR34653">
    <property type="match status" value="1"/>
</dbReference>
<dbReference type="PANTHER" id="PTHR34653:SF1">
    <property type="entry name" value="FLAGELLAR HOOK-BASAL BODY COMPLEX PROTEIN FLIE"/>
    <property type="match status" value="1"/>
</dbReference>
<dbReference type="Pfam" id="PF02049">
    <property type="entry name" value="FliE"/>
    <property type="match status" value="1"/>
</dbReference>
<dbReference type="PRINTS" id="PR01006">
    <property type="entry name" value="FLGHOOKFLIE"/>
</dbReference>
<gene>
    <name evidence="1" type="primary">fliE</name>
    <name type="ordered locus">SG1087</name>
</gene>
<accession>B5R7G4</accession>
<organism>
    <name type="scientific">Salmonella gallinarum (strain 287/91 / NCTC 13346)</name>
    <dbReference type="NCBI Taxonomy" id="550538"/>
    <lineage>
        <taxon>Bacteria</taxon>
        <taxon>Pseudomonadati</taxon>
        <taxon>Pseudomonadota</taxon>
        <taxon>Gammaproteobacteria</taxon>
        <taxon>Enterobacterales</taxon>
        <taxon>Enterobacteriaceae</taxon>
        <taxon>Salmonella</taxon>
    </lineage>
</organism>
<evidence type="ECO:0000255" key="1">
    <source>
        <dbReference type="HAMAP-Rule" id="MF_00724"/>
    </source>
</evidence>
<comment type="subcellular location">
    <subcellularLocation>
        <location evidence="1">Bacterial flagellum basal body</location>
    </subcellularLocation>
</comment>
<comment type="similarity">
    <text evidence="1">Belongs to the FliE family.</text>
</comment>
<name>FLIE_SALG2</name>
<protein>
    <recommendedName>
        <fullName evidence="1">Flagellar hook-basal body complex protein FliE</fullName>
    </recommendedName>
</protein>
<sequence>MAAIQGIEGVISQLQATAMAARGQDTHSQSTVSFAGQLHAALDRISDRQTAARVQAEKFTLGEPGIALNDVMADMQKASVSMQMGIQVRNKLVAAYQEVMSMQV</sequence>